<proteinExistence type="inferred from homology"/>
<sequence>MMRILLFLATNFAVLFVFNIILTLTGIQRQDAVGLLIFATLFGFTGSIISLLMSKSMALRSVNGQVIEQPRNETEHWLLQTVHSQAERAGLPMPTVAIYHSADVNAFATGATKKNSLVAVSTGLLNAMTRDEAEAVLAHEVSHIKSGDMVTMTLLQGVLNTFVIFISRMLAKVVATDRDGNTSQGIYFMISMVLELVFGVLASMIAMWFSRYREFKADAGSAELVGKHKMIAALQRLKTLHEPQEMEGQLAAFAINGKRGGLASLFLSHPPLEKRIEALRNLDSLNGK</sequence>
<dbReference type="EC" id="3.4.24.-" evidence="1"/>
<dbReference type="EMBL" id="CP000947">
    <property type="protein sequence ID" value="ACA31150.1"/>
    <property type="molecule type" value="Genomic_DNA"/>
</dbReference>
<dbReference type="RefSeq" id="WP_012340556.1">
    <property type="nucleotide sequence ID" value="NC_010519.1"/>
</dbReference>
<dbReference type="SMR" id="B0UUC9"/>
<dbReference type="STRING" id="228400.HSM_1408"/>
<dbReference type="MEROPS" id="M48.002"/>
<dbReference type="GeneID" id="31487706"/>
<dbReference type="KEGG" id="hsm:HSM_1408"/>
<dbReference type="HOGENOM" id="CLU_042266_1_0_6"/>
<dbReference type="GO" id="GO:0005886">
    <property type="term" value="C:plasma membrane"/>
    <property type="evidence" value="ECO:0007669"/>
    <property type="project" value="UniProtKB-SubCell"/>
</dbReference>
<dbReference type="GO" id="GO:0004222">
    <property type="term" value="F:metalloendopeptidase activity"/>
    <property type="evidence" value="ECO:0007669"/>
    <property type="project" value="UniProtKB-UniRule"/>
</dbReference>
<dbReference type="GO" id="GO:0008270">
    <property type="term" value="F:zinc ion binding"/>
    <property type="evidence" value="ECO:0007669"/>
    <property type="project" value="UniProtKB-UniRule"/>
</dbReference>
<dbReference type="GO" id="GO:0006508">
    <property type="term" value="P:proteolysis"/>
    <property type="evidence" value="ECO:0007669"/>
    <property type="project" value="UniProtKB-KW"/>
</dbReference>
<dbReference type="CDD" id="cd07335">
    <property type="entry name" value="M48B_HtpX_like"/>
    <property type="match status" value="1"/>
</dbReference>
<dbReference type="Gene3D" id="3.30.2010.10">
    <property type="entry name" value="Metalloproteases ('zincins'), catalytic domain"/>
    <property type="match status" value="1"/>
</dbReference>
<dbReference type="HAMAP" id="MF_00188">
    <property type="entry name" value="Pept_M48_protease_HtpX"/>
    <property type="match status" value="1"/>
</dbReference>
<dbReference type="InterPro" id="IPR050083">
    <property type="entry name" value="HtpX_protease"/>
</dbReference>
<dbReference type="InterPro" id="IPR022919">
    <property type="entry name" value="Pept_M48_protease_HtpX"/>
</dbReference>
<dbReference type="InterPro" id="IPR001915">
    <property type="entry name" value="Peptidase_M48"/>
</dbReference>
<dbReference type="NCBIfam" id="NF003965">
    <property type="entry name" value="PRK05457.1"/>
    <property type="match status" value="1"/>
</dbReference>
<dbReference type="PANTHER" id="PTHR43221">
    <property type="entry name" value="PROTEASE HTPX"/>
    <property type="match status" value="1"/>
</dbReference>
<dbReference type="PANTHER" id="PTHR43221:SF1">
    <property type="entry name" value="PROTEASE HTPX"/>
    <property type="match status" value="1"/>
</dbReference>
<dbReference type="Pfam" id="PF01435">
    <property type="entry name" value="Peptidase_M48"/>
    <property type="match status" value="1"/>
</dbReference>
<protein>
    <recommendedName>
        <fullName evidence="1">Protease HtpX</fullName>
        <ecNumber evidence="1">3.4.24.-</ecNumber>
    </recommendedName>
    <alternativeName>
        <fullName evidence="1">Heat shock protein HtpX</fullName>
    </alternativeName>
</protein>
<reference key="1">
    <citation type="submission" date="2008-02" db="EMBL/GenBank/DDBJ databases">
        <title>Complete sequence of Haemophilus somnus 2336.</title>
        <authorList>
            <consortium name="US DOE Joint Genome Institute"/>
            <person name="Siddaramappa S."/>
            <person name="Duncan A.J."/>
            <person name="Challacombe J.F."/>
            <person name="Rainey D."/>
            <person name="Gillaspy A.F."/>
            <person name="Carson M."/>
            <person name="Gipson J."/>
            <person name="Gipson M."/>
            <person name="Bruce D."/>
            <person name="Detter J.C."/>
            <person name="Han C.S."/>
            <person name="Land M."/>
            <person name="Tapia R."/>
            <person name="Thompson L.S."/>
            <person name="Orvis J."/>
            <person name="Zaitshik J."/>
            <person name="Barnes G."/>
            <person name="Brettin T.S."/>
            <person name="Dyer D.W."/>
            <person name="Inzana T.J."/>
        </authorList>
    </citation>
    <scope>NUCLEOTIDE SEQUENCE [LARGE SCALE GENOMIC DNA]</scope>
    <source>
        <strain>2336</strain>
    </source>
</reference>
<name>HTPX_HISS2</name>
<gene>
    <name evidence="1" type="primary">htpX</name>
    <name type="ordered locus">HSM_1408</name>
</gene>
<organism>
    <name type="scientific">Histophilus somni (strain 2336)</name>
    <name type="common">Haemophilus somnus</name>
    <dbReference type="NCBI Taxonomy" id="228400"/>
    <lineage>
        <taxon>Bacteria</taxon>
        <taxon>Pseudomonadati</taxon>
        <taxon>Pseudomonadota</taxon>
        <taxon>Gammaproteobacteria</taxon>
        <taxon>Pasteurellales</taxon>
        <taxon>Pasteurellaceae</taxon>
        <taxon>Histophilus</taxon>
    </lineage>
</organism>
<accession>B0UUC9</accession>
<keyword id="KW-0997">Cell inner membrane</keyword>
<keyword id="KW-1003">Cell membrane</keyword>
<keyword id="KW-0378">Hydrolase</keyword>
<keyword id="KW-0472">Membrane</keyword>
<keyword id="KW-0479">Metal-binding</keyword>
<keyword id="KW-0482">Metalloprotease</keyword>
<keyword id="KW-0645">Protease</keyword>
<keyword id="KW-0812">Transmembrane</keyword>
<keyword id="KW-1133">Transmembrane helix</keyword>
<keyword id="KW-0862">Zinc</keyword>
<evidence type="ECO:0000255" key="1">
    <source>
        <dbReference type="HAMAP-Rule" id="MF_00188"/>
    </source>
</evidence>
<feature type="chain" id="PRO_1000098820" description="Protease HtpX">
    <location>
        <begin position="1"/>
        <end position="288"/>
    </location>
</feature>
<feature type="transmembrane region" description="Helical" evidence="1">
    <location>
        <begin position="4"/>
        <end position="24"/>
    </location>
</feature>
<feature type="transmembrane region" description="Helical" evidence="1">
    <location>
        <begin position="33"/>
        <end position="53"/>
    </location>
</feature>
<feature type="transmembrane region" description="Helical" evidence="1">
    <location>
        <begin position="146"/>
        <end position="166"/>
    </location>
</feature>
<feature type="transmembrane region" description="Helical" evidence="1">
    <location>
        <begin position="186"/>
        <end position="206"/>
    </location>
</feature>
<feature type="active site" evidence="1">
    <location>
        <position position="140"/>
    </location>
</feature>
<feature type="binding site" evidence="1">
    <location>
        <position position="139"/>
    </location>
    <ligand>
        <name>Zn(2+)</name>
        <dbReference type="ChEBI" id="CHEBI:29105"/>
        <note>catalytic</note>
    </ligand>
</feature>
<feature type="binding site" evidence="1">
    <location>
        <position position="143"/>
    </location>
    <ligand>
        <name>Zn(2+)</name>
        <dbReference type="ChEBI" id="CHEBI:29105"/>
        <note>catalytic</note>
    </ligand>
</feature>
<feature type="binding site" evidence="1">
    <location>
        <position position="214"/>
    </location>
    <ligand>
        <name>Zn(2+)</name>
        <dbReference type="ChEBI" id="CHEBI:29105"/>
        <note>catalytic</note>
    </ligand>
</feature>
<comment type="cofactor">
    <cofactor evidence="1">
        <name>Zn(2+)</name>
        <dbReference type="ChEBI" id="CHEBI:29105"/>
    </cofactor>
    <text evidence="1">Binds 1 zinc ion per subunit.</text>
</comment>
<comment type="subcellular location">
    <subcellularLocation>
        <location evidence="1">Cell inner membrane</location>
        <topology evidence="1">Multi-pass membrane protein</topology>
    </subcellularLocation>
</comment>
<comment type="similarity">
    <text evidence="1">Belongs to the peptidase M48B family.</text>
</comment>